<dbReference type="EC" id="2.3.1.180" evidence="1"/>
<dbReference type="EMBL" id="BX571856">
    <property type="protein sequence ID" value="CAG39952.1"/>
    <property type="molecule type" value="Genomic_DNA"/>
</dbReference>
<dbReference type="RefSeq" id="WP_001100526.1">
    <property type="nucleotide sequence ID" value="NC_002952.2"/>
</dbReference>
<dbReference type="PDB" id="3IL7">
    <property type="method" value="X-ray"/>
    <property type="resolution" value="2.60 A"/>
    <property type="chains" value="A/B=1-313"/>
</dbReference>
<dbReference type="PDBsum" id="3IL7"/>
<dbReference type="SMR" id="Q6GIA4"/>
<dbReference type="KEGG" id="sar:SAR0946"/>
<dbReference type="HOGENOM" id="CLU_039592_3_1_9"/>
<dbReference type="UniPathway" id="UPA00094"/>
<dbReference type="EvolutionaryTrace" id="Q6GIA4"/>
<dbReference type="Proteomes" id="UP000000596">
    <property type="component" value="Chromosome"/>
</dbReference>
<dbReference type="GO" id="GO:0005737">
    <property type="term" value="C:cytoplasm"/>
    <property type="evidence" value="ECO:0007669"/>
    <property type="project" value="UniProtKB-SubCell"/>
</dbReference>
<dbReference type="GO" id="GO:0004315">
    <property type="term" value="F:3-oxoacyl-[acyl-carrier-protein] synthase activity"/>
    <property type="evidence" value="ECO:0007669"/>
    <property type="project" value="InterPro"/>
</dbReference>
<dbReference type="GO" id="GO:0033818">
    <property type="term" value="F:beta-ketoacyl-acyl-carrier-protein synthase III activity"/>
    <property type="evidence" value="ECO:0007669"/>
    <property type="project" value="UniProtKB-UniRule"/>
</dbReference>
<dbReference type="GO" id="GO:0006633">
    <property type="term" value="P:fatty acid biosynthetic process"/>
    <property type="evidence" value="ECO:0007669"/>
    <property type="project" value="UniProtKB-UniRule"/>
</dbReference>
<dbReference type="CDD" id="cd00830">
    <property type="entry name" value="KAS_III"/>
    <property type="match status" value="1"/>
</dbReference>
<dbReference type="FunFam" id="3.40.47.10:FF:000004">
    <property type="entry name" value="3-oxoacyl-[acyl-carrier-protein] synthase 3"/>
    <property type="match status" value="1"/>
</dbReference>
<dbReference type="Gene3D" id="3.40.47.10">
    <property type="match status" value="2"/>
</dbReference>
<dbReference type="HAMAP" id="MF_01815">
    <property type="entry name" value="FabH"/>
    <property type="match status" value="1"/>
</dbReference>
<dbReference type="InterPro" id="IPR013747">
    <property type="entry name" value="ACP_syn_III_C"/>
</dbReference>
<dbReference type="InterPro" id="IPR013751">
    <property type="entry name" value="ACP_syn_III_N"/>
</dbReference>
<dbReference type="InterPro" id="IPR004655">
    <property type="entry name" value="FabH"/>
</dbReference>
<dbReference type="InterPro" id="IPR016039">
    <property type="entry name" value="Thiolase-like"/>
</dbReference>
<dbReference type="NCBIfam" id="TIGR00747">
    <property type="entry name" value="fabH"/>
    <property type="match status" value="1"/>
</dbReference>
<dbReference type="NCBIfam" id="NF006829">
    <property type="entry name" value="PRK09352.1"/>
    <property type="match status" value="1"/>
</dbReference>
<dbReference type="PANTHER" id="PTHR43091">
    <property type="entry name" value="3-OXOACYL-[ACYL-CARRIER-PROTEIN] SYNTHASE"/>
    <property type="match status" value="1"/>
</dbReference>
<dbReference type="PANTHER" id="PTHR43091:SF1">
    <property type="entry name" value="BETA-KETOACYL-[ACYL-CARRIER-PROTEIN] SYNTHASE III, CHLOROPLASTIC"/>
    <property type="match status" value="1"/>
</dbReference>
<dbReference type="Pfam" id="PF08545">
    <property type="entry name" value="ACP_syn_III"/>
    <property type="match status" value="1"/>
</dbReference>
<dbReference type="Pfam" id="PF08541">
    <property type="entry name" value="ACP_syn_III_C"/>
    <property type="match status" value="1"/>
</dbReference>
<dbReference type="SUPFAM" id="SSF53901">
    <property type="entry name" value="Thiolase-like"/>
    <property type="match status" value="1"/>
</dbReference>
<proteinExistence type="evidence at protein level"/>
<feature type="chain" id="PRO_0000110471" description="Beta-ketoacyl-[acyl-carrier-protein] synthase III">
    <location>
        <begin position="1"/>
        <end position="313"/>
    </location>
</feature>
<feature type="region of interest" description="ACP-binding" evidence="1">
    <location>
        <begin position="239"/>
        <end position="243"/>
    </location>
</feature>
<feature type="active site" evidence="1">
    <location>
        <position position="112"/>
    </location>
</feature>
<feature type="active site" evidence="1">
    <location>
        <position position="238"/>
    </location>
</feature>
<feature type="active site" evidence="1">
    <location>
        <position position="268"/>
    </location>
</feature>
<feature type="strand" evidence="2">
    <location>
        <begin position="3"/>
        <end position="11"/>
    </location>
</feature>
<feature type="strand" evidence="2">
    <location>
        <begin position="14"/>
        <end position="18"/>
    </location>
</feature>
<feature type="helix" evidence="2">
    <location>
        <begin position="19"/>
        <end position="24"/>
    </location>
</feature>
<feature type="helix" evidence="2">
    <location>
        <begin position="30"/>
        <end position="37"/>
    </location>
</feature>
<feature type="strand" evidence="2">
    <location>
        <begin position="40"/>
        <end position="44"/>
    </location>
</feature>
<feature type="helix" evidence="2">
    <location>
        <begin position="51"/>
        <end position="65"/>
    </location>
</feature>
<feature type="helix" evidence="2">
    <location>
        <begin position="70"/>
        <end position="72"/>
    </location>
</feature>
<feature type="strand" evidence="2">
    <location>
        <begin position="75"/>
        <end position="79"/>
    </location>
</feature>
<feature type="strand" evidence="2">
    <location>
        <begin position="86"/>
        <end position="88"/>
    </location>
</feature>
<feature type="helix" evidence="2">
    <location>
        <begin position="90"/>
        <end position="98"/>
    </location>
</feature>
<feature type="strand" evidence="2">
    <location>
        <begin position="104"/>
        <end position="109"/>
    </location>
</feature>
<feature type="helix" evidence="2">
    <location>
        <begin position="111"/>
        <end position="113"/>
    </location>
</feature>
<feature type="helix" evidence="2">
    <location>
        <begin position="114"/>
        <end position="127"/>
    </location>
</feature>
<feature type="strand" evidence="2">
    <location>
        <begin position="134"/>
        <end position="141"/>
    </location>
</feature>
<feature type="helix" evidence="2">
    <location>
        <begin position="142"/>
        <end position="145"/>
    </location>
</feature>
<feature type="helix" evidence="2">
    <location>
        <begin position="151"/>
        <end position="154"/>
    </location>
</feature>
<feature type="strand" evidence="2">
    <location>
        <begin position="159"/>
        <end position="168"/>
    </location>
</feature>
<feature type="strand" evidence="2">
    <location>
        <begin position="174"/>
        <end position="182"/>
    </location>
</feature>
<feature type="helix" evidence="2">
    <location>
        <begin position="184"/>
        <end position="189"/>
    </location>
</feature>
<feature type="strand" evidence="2">
    <location>
        <begin position="190"/>
        <end position="192"/>
    </location>
</feature>
<feature type="turn" evidence="2">
    <location>
        <begin position="194"/>
        <end position="196"/>
    </location>
</feature>
<feature type="strand" evidence="2">
    <location>
        <begin position="199"/>
        <end position="201"/>
    </location>
</feature>
<feature type="helix" evidence="2">
    <location>
        <begin position="203"/>
        <end position="224"/>
    </location>
</feature>
<feature type="turn" evidence="2">
    <location>
        <begin position="229"/>
        <end position="231"/>
    </location>
</feature>
<feature type="strand" evidence="2">
    <location>
        <begin position="233"/>
        <end position="237"/>
    </location>
</feature>
<feature type="helix" evidence="2">
    <location>
        <begin position="242"/>
        <end position="252"/>
    </location>
</feature>
<feature type="helix" evidence="2">
    <location>
        <begin position="256"/>
        <end position="258"/>
    </location>
</feature>
<feature type="helix" evidence="2">
    <location>
        <begin position="263"/>
        <end position="266"/>
    </location>
</feature>
<feature type="helix" evidence="2">
    <location>
        <begin position="270"/>
        <end position="272"/>
    </location>
</feature>
<feature type="helix" evidence="2">
    <location>
        <begin position="273"/>
        <end position="283"/>
    </location>
</feature>
<feature type="strand" evidence="2">
    <location>
        <begin position="292"/>
        <end position="299"/>
    </location>
</feature>
<feature type="turn" evidence="2">
    <location>
        <begin position="300"/>
        <end position="302"/>
    </location>
</feature>
<feature type="strand" evidence="2">
    <location>
        <begin position="303"/>
        <end position="310"/>
    </location>
</feature>
<name>FABH_STAAR</name>
<reference key="1">
    <citation type="journal article" date="2004" name="Proc. Natl. Acad. Sci. U.S.A.">
        <title>Complete genomes of two clinical Staphylococcus aureus strains: evidence for the rapid evolution of virulence and drug resistance.</title>
        <authorList>
            <person name="Holden M.T.G."/>
            <person name="Feil E.J."/>
            <person name="Lindsay J.A."/>
            <person name="Peacock S.J."/>
            <person name="Day N.P.J."/>
            <person name="Enright M.C."/>
            <person name="Foster T.J."/>
            <person name="Moore C.E."/>
            <person name="Hurst L."/>
            <person name="Atkin R."/>
            <person name="Barron A."/>
            <person name="Bason N."/>
            <person name="Bentley S.D."/>
            <person name="Chillingworth C."/>
            <person name="Chillingworth T."/>
            <person name="Churcher C."/>
            <person name="Clark L."/>
            <person name="Corton C."/>
            <person name="Cronin A."/>
            <person name="Doggett J."/>
            <person name="Dowd L."/>
            <person name="Feltwell T."/>
            <person name="Hance Z."/>
            <person name="Harris B."/>
            <person name="Hauser H."/>
            <person name="Holroyd S."/>
            <person name="Jagels K."/>
            <person name="James K.D."/>
            <person name="Lennard N."/>
            <person name="Line A."/>
            <person name="Mayes R."/>
            <person name="Moule S."/>
            <person name="Mungall K."/>
            <person name="Ormond D."/>
            <person name="Quail M.A."/>
            <person name="Rabbinowitsch E."/>
            <person name="Rutherford K.M."/>
            <person name="Sanders M."/>
            <person name="Sharp S."/>
            <person name="Simmonds M."/>
            <person name="Stevens K."/>
            <person name="Whitehead S."/>
            <person name="Barrell B.G."/>
            <person name="Spratt B.G."/>
            <person name="Parkhill J."/>
        </authorList>
    </citation>
    <scope>NUCLEOTIDE SEQUENCE [LARGE SCALE GENOMIC DNA]</scope>
    <source>
        <strain>MRSA252</strain>
    </source>
</reference>
<accession>Q6GIA4</accession>
<comment type="function">
    <text evidence="1">Catalyzes the condensation reaction of fatty acid synthesis by the addition to an acyl acceptor of two carbons from malonyl-ACP. Catalyzes the first condensation reaction which initiates fatty acid synthesis and may therefore play a role in governing the total rate of fatty acid production. Possesses both acetoacetyl-ACP synthase and acetyl transacylase activities. Its substrate specificity determines the biosynthesis of branched-chain and/or straight-chain of fatty acids.</text>
</comment>
<comment type="catalytic activity">
    <reaction evidence="1">
        <text>malonyl-[ACP] + acetyl-CoA + H(+) = 3-oxobutanoyl-[ACP] + CO2 + CoA</text>
        <dbReference type="Rhea" id="RHEA:12080"/>
        <dbReference type="Rhea" id="RHEA-COMP:9623"/>
        <dbReference type="Rhea" id="RHEA-COMP:9625"/>
        <dbReference type="ChEBI" id="CHEBI:15378"/>
        <dbReference type="ChEBI" id="CHEBI:16526"/>
        <dbReference type="ChEBI" id="CHEBI:57287"/>
        <dbReference type="ChEBI" id="CHEBI:57288"/>
        <dbReference type="ChEBI" id="CHEBI:78449"/>
        <dbReference type="ChEBI" id="CHEBI:78450"/>
        <dbReference type="EC" id="2.3.1.180"/>
    </reaction>
</comment>
<comment type="pathway">
    <text evidence="1">Lipid metabolism; fatty acid biosynthesis.</text>
</comment>
<comment type="subunit">
    <text evidence="1">Homodimer.</text>
</comment>
<comment type="subcellular location">
    <subcellularLocation>
        <location evidence="1">Cytoplasm</location>
    </subcellularLocation>
</comment>
<comment type="domain">
    <text evidence="1">The last Arg residue of the ACP-binding site is essential for the weak association between ACP/AcpP and FabH.</text>
</comment>
<comment type="similarity">
    <text evidence="1">Belongs to the thiolase-like superfamily. FabH family.</text>
</comment>
<keyword id="KW-0002">3D-structure</keyword>
<keyword id="KW-0012">Acyltransferase</keyword>
<keyword id="KW-0963">Cytoplasm</keyword>
<keyword id="KW-0275">Fatty acid biosynthesis</keyword>
<keyword id="KW-0276">Fatty acid metabolism</keyword>
<keyword id="KW-0444">Lipid biosynthesis</keyword>
<keyword id="KW-0443">Lipid metabolism</keyword>
<keyword id="KW-0511">Multifunctional enzyme</keyword>
<keyword id="KW-0808">Transferase</keyword>
<organism>
    <name type="scientific">Staphylococcus aureus (strain MRSA252)</name>
    <dbReference type="NCBI Taxonomy" id="282458"/>
    <lineage>
        <taxon>Bacteria</taxon>
        <taxon>Bacillati</taxon>
        <taxon>Bacillota</taxon>
        <taxon>Bacilli</taxon>
        <taxon>Bacillales</taxon>
        <taxon>Staphylococcaceae</taxon>
        <taxon>Staphylococcus</taxon>
    </lineage>
</organism>
<protein>
    <recommendedName>
        <fullName evidence="1">Beta-ketoacyl-[acyl-carrier-protein] synthase III</fullName>
        <shortName evidence="1">Beta-ketoacyl-ACP synthase III</shortName>
        <shortName evidence="1">KAS III</shortName>
        <ecNumber evidence="1">2.3.1.180</ecNumber>
    </recommendedName>
    <alternativeName>
        <fullName evidence="1">3-oxoacyl-[acyl-carrier-protein] synthase 3</fullName>
    </alternativeName>
    <alternativeName>
        <fullName evidence="1">3-oxoacyl-[acyl-carrier-protein] synthase III</fullName>
    </alternativeName>
</protein>
<evidence type="ECO:0000255" key="1">
    <source>
        <dbReference type="HAMAP-Rule" id="MF_01815"/>
    </source>
</evidence>
<evidence type="ECO:0007829" key="2">
    <source>
        <dbReference type="PDB" id="3IL7"/>
    </source>
</evidence>
<sequence length="313" mass="33879">MNVGIKGFGAYAPEKIIDNAYFEQFLDTSDEWISKMTGIKERHWADDDQDTSDLAYEASVKAIADAGIQPEDIDMIIVATATGDMPFPTVANMLQERLGTGKVASMDQLAACSGFMYSMITAKQYVQSGDYHNILVVGADKLSKITDLTDRSTAVLFGDGAGAVIIGEVSEGRGIISYEMGSDGTGGKHLYLDKDTGKLKMNGREVFKFAVRIMGDASTRVVEKANLTSDDIDLFIPHQANIRIMESARERLGISKDKMSVSVNKYGNTSAASIPLSIDQELKNGKLKDDDTIVLVGFGGGLTWGAMTIKWGK</sequence>
<gene>
    <name evidence="1" type="primary">fabH</name>
    <name type="ordered locus">SAR0946</name>
</gene>